<protein>
    <recommendedName>
        <fullName evidence="1">Glutamyl-tRNA reductase</fullName>
        <shortName evidence="1">GluTR</shortName>
        <ecNumber evidence="1">1.2.1.70</ecNumber>
    </recommendedName>
</protein>
<keyword id="KW-0521">NADP</keyword>
<keyword id="KW-0560">Oxidoreductase</keyword>
<keyword id="KW-0627">Porphyrin biosynthesis</keyword>
<dbReference type="EC" id="1.2.1.70" evidence="1"/>
<dbReference type="EMBL" id="CP000247">
    <property type="protein sequence ID" value="ABG69269.1"/>
    <property type="molecule type" value="Genomic_DNA"/>
</dbReference>
<dbReference type="RefSeq" id="WP_011579120.1">
    <property type="nucleotide sequence ID" value="NC_008253.1"/>
</dbReference>
<dbReference type="SMR" id="Q0TIG0"/>
<dbReference type="KEGG" id="ecp:ECP_1258"/>
<dbReference type="HOGENOM" id="CLU_035113_2_2_6"/>
<dbReference type="UniPathway" id="UPA00251">
    <property type="reaction ID" value="UER00316"/>
</dbReference>
<dbReference type="Proteomes" id="UP000009182">
    <property type="component" value="Chromosome"/>
</dbReference>
<dbReference type="GO" id="GO:0008883">
    <property type="term" value="F:glutamyl-tRNA reductase activity"/>
    <property type="evidence" value="ECO:0007669"/>
    <property type="project" value="UniProtKB-UniRule"/>
</dbReference>
<dbReference type="GO" id="GO:0050661">
    <property type="term" value="F:NADP binding"/>
    <property type="evidence" value="ECO:0007669"/>
    <property type="project" value="InterPro"/>
</dbReference>
<dbReference type="GO" id="GO:0019353">
    <property type="term" value="P:protoporphyrinogen IX biosynthetic process from glutamate"/>
    <property type="evidence" value="ECO:0007669"/>
    <property type="project" value="TreeGrafter"/>
</dbReference>
<dbReference type="CDD" id="cd05213">
    <property type="entry name" value="NAD_bind_Glutamyl_tRNA_reduct"/>
    <property type="match status" value="1"/>
</dbReference>
<dbReference type="FunFam" id="3.30.460.30:FF:000001">
    <property type="entry name" value="Glutamyl-tRNA reductase"/>
    <property type="match status" value="1"/>
</dbReference>
<dbReference type="FunFam" id="3.40.50.720:FF:000031">
    <property type="entry name" value="Glutamyl-tRNA reductase"/>
    <property type="match status" value="1"/>
</dbReference>
<dbReference type="Gene3D" id="3.30.460.30">
    <property type="entry name" value="Glutamyl-tRNA reductase, N-terminal domain"/>
    <property type="match status" value="1"/>
</dbReference>
<dbReference type="Gene3D" id="3.40.50.720">
    <property type="entry name" value="NAD(P)-binding Rossmann-like Domain"/>
    <property type="match status" value="1"/>
</dbReference>
<dbReference type="HAMAP" id="MF_00087">
    <property type="entry name" value="Glu_tRNA_reductase"/>
    <property type="match status" value="1"/>
</dbReference>
<dbReference type="InterPro" id="IPR000343">
    <property type="entry name" value="4pyrrol_synth_GluRdtase"/>
</dbReference>
<dbReference type="InterPro" id="IPR015896">
    <property type="entry name" value="4pyrrol_synth_GluRdtase_dimer"/>
</dbReference>
<dbReference type="InterPro" id="IPR015895">
    <property type="entry name" value="4pyrrol_synth_GluRdtase_N"/>
</dbReference>
<dbReference type="InterPro" id="IPR018214">
    <property type="entry name" value="GluRdtase_CS"/>
</dbReference>
<dbReference type="InterPro" id="IPR036453">
    <property type="entry name" value="GluRdtase_dimer_dom_sf"/>
</dbReference>
<dbReference type="InterPro" id="IPR036343">
    <property type="entry name" value="GluRdtase_N_sf"/>
</dbReference>
<dbReference type="InterPro" id="IPR036291">
    <property type="entry name" value="NAD(P)-bd_dom_sf"/>
</dbReference>
<dbReference type="InterPro" id="IPR006151">
    <property type="entry name" value="Shikm_DH/Glu-tRNA_Rdtase"/>
</dbReference>
<dbReference type="NCBIfam" id="TIGR01035">
    <property type="entry name" value="hemA"/>
    <property type="match status" value="1"/>
</dbReference>
<dbReference type="PANTHER" id="PTHR43013">
    <property type="entry name" value="GLUTAMYL-TRNA REDUCTASE"/>
    <property type="match status" value="1"/>
</dbReference>
<dbReference type="PANTHER" id="PTHR43013:SF1">
    <property type="entry name" value="GLUTAMYL-TRNA REDUCTASE"/>
    <property type="match status" value="1"/>
</dbReference>
<dbReference type="Pfam" id="PF00745">
    <property type="entry name" value="GlutR_dimer"/>
    <property type="match status" value="1"/>
</dbReference>
<dbReference type="Pfam" id="PF05201">
    <property type="entry name" value="GlutR_N"/>
    <property type="match status" value="1"/>
</dbReference>
<dbReference type="Pfam" id="PF01488">
    <property type="entry name" value="Shikimate_DH"/>
    <property type="match status" value="1"/>
</dbReference>
<dbReference type="PIRSF" id="PIRSF000445">
    <property type="entry name" value="4pyrrol_synth_GluRdtase"/>
    <property type="match status" value="1"/>
</dbReference>
<dbReference type="SUPFAM" id="SSF69742">
    <property type="entry name" value="Glutamyl tRNA-reductase catalytic, N-terminal domain"/>
    <property type="match status" value="1"/>
</dbReference>
<dbReference type="SUPFAM" id="SSF69075">
    <property type="entry name" value="Glutamyl tRNA-reductase dimerization domain"/>
    <property type="match status" value="1"/>
</dbReference>
<dbReference type="SUPFAM" id="SSF51735">
    <property type="entry name" value="NAD(P)-binding Rossmann-fold domains"/>
    <property type="match status" value="1"/>
</dbReference>
<dbReference type="PROSITE" id="PS00747">
    <property type="entry name" value="GLUTR"/>
    <property type="match status" value="1"/>
</dbReference>
<sequence>MTLLALGINHKTAPVSLRERVSFSPDKLDQALDSLLAQPMVQAGVVLSTCNRTELYLSVEERDDLQEALIRWLCDYHNLNEDDLRNSLYWHQDNDAVSHLMRVASGLDSLVLGEPQILGQVKKAFADSQKGHMKASELERMFQKSFSVAKRVRTETDIGASAVSVAFAACTLARQIFESLSTVTVLLVGAGETIELVARHLREHKVQKMIIANRTRERAQILADEVGAEVIALSDIDERLREADIIISSTASPLPIIGKGMVERALKSRRNQPMLLVDIAVPRDVEPEVGKLANAYLYSVDDLQSIISHNLAQRKAAAVEAETIVAQEASEFMAWLRAQSASETIRDYRSQAEQVRDELTAKALAALEQGGDAQTIMQDLAWKLTNRLIHAPTKSLQQAARDGDNERLNILRDSLGLE</sequence>
<feature type="chain" id="PRO_1000004620" description="Glutamyl-tRNA reductase">
    <location>
        <begin position="1"/>
        <end position="418"/>
    </location>
</feature>
<feature type="active site" description="Nucleophile" evidence="1">
    <location>
        <position position="50"/>
    </location>
</feature>
<feature type="binding site" evidence="1">
    <location>
        <begin position="49"/>
        <end position="52"/>
    </location>
    <ligand>
        <name>substrate</name>
    </ligand>
</feature>
<feature type="binding site" evidence="1">
    <location>
        <position position="109"/>
    </location>
    <ligand>
        <name>substrate</name>
    </ligand>
</feature>
<feature type="binding site" evidence="1">
    <location>
        <begin position="114"/>
        <end position="116"/>
    </location>
    <ligand>
        <name>substrate</name>
    </ligand>
</feature>
<feature type="binding site" evidence="1">
    <location>
        <position position="120"/>
    </location>
    <ligand>
        <name>substrate</name>
    </ligand>
</feature>
<feature type="binding site" evidence="1">
    <location>
        <begin position="189"/>
        <end position="194"/>
    </location>
    <ligand>
        <name>NADP(+)</name>
        <dbReference type="ChEBI" id="CHEBI:58349"/>
    </ligand>
</feature>
<feature type="site" description="Important for activity" evidence="1">
    <location>
        <position position="99"/>
    </location>
</feature>
<organism>
    <name type="scientific">Escherichia coli O6:K15:H31 (strain 536 / UPEC)</name>
    <dbReference type="NCBI Taxonomy" id="362663"/>
    <lineage>
        <taxon>Bacteria</taxon>
        <taxon>Pseudomonadati</taxon>
        <taxon>Pseudomonadota</taxon>
        <taxon>Gammaproteobacteria</taxon>
        <taxon>Enterobacterales</taxon>
        <taxon>Enterobacteriaceae</taxon>
        <taxon>Escherichia</taxon>
    </lineage>
</organism>
<name>HEM1_ECOL5</name>
<gene>
    <name evidence="1" type="primary">hemA</name>
    <name type="ordered locus">ECP_1258</name>
</gene>
<accession>Q0TIG0</accession>
<comment type="function">
    <text evidence="1">Catalyzes the NADPH-dependent reduction of glutamyl-tRNA(Glu) to glutamate 1-semialdehyde (GSA).</text>
</comment>
<comment type="catalytic activity">
    <reaction evidence="1">
        <text>(S)-4-amino-5-oxopentanoate + tRNA(Glu) + NADP(+) = L-glutamyl-tRNA(Glu) + NADPH + H(+)</text>
        <dbReference type="Rhea" id="RHEA:12344"/>
        <dbReference type="Rhea" id="RHEA-COMP:9663"/>
        <dbReference type="Rhea" id="RHEA-COMP:9680"/>
        <dbReference type="ChEBI" id="CHEBI:15378"/>
        <dbReference type="ChEBI" id="CHEBI:57501"/>
        <dbReference type="ChEBI" id="CHEBI:57783"/>
        <dbReference type="ChEBI" id="CHEBI:58349"/>
        <dbReference type="ChEBI" id="CHEBI:78442"/>
        <dbReference type="ChEBI" id="CHEBI:78520"/>
        <dbReference type="EC" id="1.2.1.70"/>
    </reaction>
</comment>
<comment type="pathway">
    <text evidence="1">Porphyrin-containing compound metabolism; protoporphyrin-IX biosynthesis; 5-aminolevulinate from L-glutamyl-tRNA(Glu): step 1/2.</text>
</comment>
<comment type="subunit">
    <text evidence="1">Homodimer.</text>
</comment>
<comment type="domain">
    <text evidence="1">Possesses an unusual extended V-shaped dimeric structure with each monomer consisting of three distinct domains arranged along a curved 'spinal' alpha-helix. The N-terminal catalytic domain specifically recognizes the glutamate moiety of the substrate. The second domain is the NADPH-binding domain, and the third C-terminal domain is responsible for dimerization.</text>
</comment>
<comment type="miscellaneous">
    <text evidence="1">During catalysis, the active site Cys acts as a nucleophile attacking the alpha-carbonyl group of tRNA-bound glutamate with the formation of a thioester intermediate between enzyme and glutamate, and the concomitant release of tRNA(Glu). The thioester intermediate is finally reduced by direct hydride transfer from NADPH, to form the product GSA.</text>
</comment>
<comment type="similarity">
    <text evidence="1">Belongs to the glutamyl-tRNA reductase family.</text>
</comment>
<reference key="1">
    <citation type="journal article" date="2006" name="Mol. Microbiol.">
        <title>Role of pathogenicity island-associated integrases in the genome plasticity of uropathogenic Escherichia coli strain 536.</title>
        <authorList>
            <person name="Hochhut B."/>
            <person name="Wilde C."/>
            <person name="Balling G."/>
            <person name="Middendorf B."/>
            <person name="Dobrindt U."/>
            <person name="Brzuszkiewicz E."/>
            <person name="Gottschalk G."/>
            <person name="Carniel E."/>
            <person name="Hacker J."/>
        </authorList>
    </citation>
    <scope>NUCLEOTIDE SEQUENCE [LARGE SCALE GENOMIC DNA]</scope>
    <source>
        <strain>536 / UPEC</strain>
    </source>
</reference>
<proteinExistence type="inferred from homology"/>
<evidence type="ECO:0000255" key="1">
    <source>
        <dbReference type="HAMAP-Rule" id="MF_00087"/>
    </source>
</evidence>